<geneLocation type="chloroplast"/>
<keyword id="KW-0150">Chloroplast</keyword>
<keyword id="KW-0472">Membrane</keyword>
<keyword id="KW-0602">Photosynthesis</keyword>
<keyword id="KW-0604">Photosystem II</keyword>
<keyword id="KW-0934">Plastid</keyword>
<keyword id="KW-0674">Reaction center</keyword>
<keyword id="KW-0793">Thylakoid</keyword>
<keyword id="KW-0812">Transmembrane</keyword>
<keyword id="KW-1133">Transmembrane helix</keyword>
<proteinExistence type="inferred from homology"/>
<organism>
    <name type="scientific">Carica papaya</name>
    <name type="common">Papaya</name>
    <dbReference type="NCBI Taxonomy" id="3649"/>
    <lineage>
        <taxon>Eukaryota</taxon>
        <taxon>Viridiplantae</taxon>
        <taxon>Streptophyta</taxon>
        <taxon>Embryophyta</taxon>
        <taxon>Tracheophyta</taxon>
        <taxon>Spermatophyta</taxon>
        <taxon>Magnoliopsida</taxon>
        <taxon>eudicotyledons</taxon>
        <taxon>Gunneridae</taxon>
        <taxon>Pentapetalae</taxon>
        <taxon>rosids</taxon>
        <taxon>malvids</taxon>
        <taxon>Brassicales</taxon>
        <taxon>Caricaceae</taxon>
        <taxon>Carica</taxon>
    </lineage>
</organism>
<sequence>MLTLKLFVYTVVIFFVSLFIFGFLSNDPGRNPGREE</sequence>
<evidence type="ECO:0000255" key="1">
    <source>
        <dbReference type="HAMAP-Rule" id="MF_01316"/>
    </source>
</evidence>
<reference key="1">
    <citation type="journal article" date="2008" name="Nature">
        <title>The draft genome of the transgenic tropical fruit tree papaya (Carica papaya Linnaeus).</title>
        <authorList>
            <person name="Ming R."/>
            <person name="Hou S."/>
            <person name="Feng Y."/>
            <person name="Yu Q."/>
            <person name="Dionne-Laporte A."/>
            <person name="Saw J.H."/>
            <person name="Senin P."/>
            <person name="Wang W."/>
            <person name="Ly B.V."/>
            <person name="Lewis K.L."/>
            <person name="Salzberg S.L."/>
            <person name="Feng L."/>
            <person name="Jones M.R."/>
            <person name="Skelton R.L."/>
            <person name="Murray J.E."/>
            <person name="Chen C."/>
            <person name="Qian W."/>
            <person name="Shen J."/>
            <person name="Du P."/>
            <person name="Eustice M."/>
            <person name="Tong E."/>
            <person name="Tang H."/>
            <person name="Lyons E."/>
            <person name="Paull R.E."/>
            <person name="Michael T.P."/>
            <person name="Wall K."/>
            <person name="Rice D.W."/>
            <person name="Albert H."/>
            <person name="Wang M.L."/>
            <person name="Zhu Y.J."/>
            <person name="Schatz M."/>
            <person name="Nagarajan N."/>
            <person name="Acob R.A."/>
            <person name="Guan P."/>
            <person name="Blas A."/>
            <person name="Wai C.M."/>
            <person name="Ackerman C.M."/>
            <person name="Ren Y."/>
            <person name="Liu C."/>
            <person name="Wang J."/>
            <person name="Wang J."/>
            <person name="Na J.K."/>
            <person name="Shakirov E.V."/>
            <person name="Haas B."/>
            <person name="Thimmapuram J."/>
            <person name="Nelson D."/>
            <person name="Wang X."/>
            <person name="Bowers J.E."/>
            <person name="Gschwend A.R."/>
            <person name="Delcher A.L."/>
            <person name="Singh R."/>
            <person name="Suzuki J.Y."/>
            <person name="Tripathi S."/>
            <person name="Neupane K."/>
            <person name="Wei H."/>
            <person name="Irikura B."/>
            <person name="Paidi M."/>
            <person name="Jiang N."/>
            <person name="Zhang W."/>
            <person name="Presting G."/>
            <person name="Windsor A."/>
            <person name="Navajas-Perez R."/>
            <person name="Torres M.J."/>
            <person name="Feltus F.A."/>
            <person name="Porter B."/>
            <person name="Li Y."/>
            <person name="Burroughs A.M."/>
            <person name="Luo M.C."/>
            <person name="Liu L."/>
            <person name="Christopher D.A."/>
            <person name="Mount S.M."/>
            <person name="Moore P.H."/>
            <person name="Sugimura T."/>
            <person name="Jiang J."/>
            <person name="Schuler M.A."/>
            <person name="Friedman V."/>
            <person name="Mitchell-Olds T."/>
            <person name="Shippen D.E."/>
            <person name="dePamphilis C.W."/>
            <person name="Palmer J.D."/>
            <person name="Freeling M."/>
            <person name="Paterson A.H."/>
            <person name="Gonsalves D."/>
            <person name="Wang L."/>
            <person name="Alam M."/>
        </authorList>
    </citation>
    <scope>NUCLEOTIDE SEQUENCE [LARGE SCALE GENOMIC DNA]</scope>
    <source>
        <strain>cv. SunUp</strain>
    </source>
</reference>
<feature type="chain" id="PRO_0000353220" description="Photosystem II reaction center protein I">
    <location>
        <begin position="1"/>
        <end position="36"/>
    </location>
</feature>
<feature type="transmembrane region" description="Helical" evidence="1">
    <location>
        <begin position="4"/>
        <end position="24"/>
    </location>
</feature>
<dbReference type="EMBL" id="EU431223">
    <property type="protein sequence ID" value="ABY86766.1"/>
    <property type="molecule type" value="Genomic_DNA"/>
</dbReference>
<dbReference type="RefSeq" id="YP_001671667.1">
    <property type="nucleotide sequence ID" value="NC_010323.1"/>
</dbReference>
<dbReference type="SMR" id="B1A919"/>
<dbReference type="GeneID" id="5878372"/>
<dbReference type="KEGG" id="cpap:5878372"/>
<dbReference type="OrthoDB" id="564007at2759"/>
<dbReference type="GO" id="GO:0009535">
    <property type="term" value="C:chloroplast thylakoid membrane"/>
    <property type="evidence" value="ECO:0007669"/>
    <property type="project" value="UniProtKB-SubCell"/>
</dbReference>
<dbReference type="GO" id="GO:0009539">
    <property type="term" value="C:photosystem II reaction center"/>
    <property type="evidence" value="ECO:0007669"/>
    <property type="project" value="InterPro"/>
</dbReference>
<dbReference type="GO" id="GO:0015979">
    <property type="term" value="P:photosynthesis"/>
    <property type="evidence" value="ECO:0007669"/>
    <property type="project" value="UniProtKB-UniRule"/>
</dbReference>
<dbReference type="HAMAP" id="MF_01316">
    <property type="entry name" value="PSII_PsbI"/>
    <property type="match status" value="1"/>
</dbReference>
<dbReference type="InterPro" id="IPR003686">
    <property type="entry name" value="PSII_PsbI"/>
</dbReference>
<dbReference type="InterPro" id="IPR037271">
    <property type="entry name" value="PSII_PsbI_sf"/>
</dbReference>
<dbReference type="NCBIfam" id="NF002735">
    <property type="entry name" value="PRK02655.1"/>
    <property type="match status" value="1"/>
</dbReference>
<dbReference type="PANTHER" id="PTHR35772">
    <property type="entry name" value="PHOTOSYSTEM II REACTION CENTER PROTEIN I"/>
    <property type="match status" value="1"/>
</dbReference>
<dbReference type="PANTHER" id="PTHR35772:SF1">
    <property type="entry name" value="PHOTOSYSTEM II REACTION CENTER PROTEIN I"/>
    <property type="match status" value="1"/>
</dbReference>
<dbReference type="Pfam" id="PF02532">
    <property type="entry name" value="PsbI"/>
    <property type="match status" value="1"/>
</dbReference>
<dbReference type="SUPFAM" id="SSF161041">
    <property type="entry name" value="Photosystem II reaction center protein I, PsbI"/>
    <property type="match status" value="1"/>
</dbReference>
<gene>
    <name evidence="1" type="primary">psbI</name>
</gene>
<name>PSBI_CARPA</name>
<comment type="function">
    <text evidence="1">One of the components of the core complex of photosystem II (PSII), required for its stability and/or assembly. PSII is a light-driven water:plastoquinone oxidoreductase that uses light energy to abstract electrons from H(2)O, generating O(2) and a proton gradient subsequently used for ATP formation. It consists of a core antenna complex that captures photons, and an electron transfer chain that converts photonic excitation into a charge separation.</text>
</comment>
<comment type="subunit">
    <text evidence="1">PSII is composed of 1 copy each of membrane proteins PsbA, PsbB, PsbC, PsbD, PsbE, PsbF, PsbH, PsbI, PsbJ, PsbK, PsbL, PsbM, PsbT, PsbX, PsbY, PsbZ, Psb30/Ycf12, at least 3 peripheral proteins of the oxygen-evolving complex and a large number of cofactors. It forms dimeric complexes.</text>
</comment>
<comment type="subcellular location">
    <subcellularLocation>
        <location evidence="1">Plastid</location>
        <location evidence="1">Chloroplast thylakoid membrane</location>
        <topology evidence="1">Single-pass membrane protein</topology>
    </subcellularLocation>
</comment>
<comment type="similarity">
    <text evidence="1">Belongs to the PsbI family.</text>
</comment>
<protein>
    <recommendedName>
        <fullName evidence="1">Photosystem II reaction center protein I</fullName>
        <shortName evidence="1">PSII-I</shortName>
    </recommendedName>
    <alternativeName>
        <fullName evidence="1">PSII 4.8 kDa protein</fullName>
    </alternativeName>
</protein>
<accession>B1A919</accession>